<proteinExistence type="inferred from homology"/>
<keyword id="KW-0067">ATP-binding</keyword>
<keyword id="KW-0547">Nucleotide-binding</keyword>
<keyword id="KW-1185">Reference proteome</keyword>
<keyword id="KW-0813">Transport</keyword>
<feature type="chain" id="PRO_0000360065" description="Uncharacterized ABC transporter ATP-binding protein YclH">
    <location>
        <begin position="1"/>
        <end position="226"/>
    </location>
</feature>
<feature type="domain" description="ABC transporter" evidence="1">
    <location>
        <begin position="4"/>
        <end position="226"/>
    </location>
</feature>
<feature type="binding site" evidence="1">
    <location>
        <begin position="38"/>
        <end position="45"/>
    </location>
    <ligand>
        <name>ATP</name>
        <dbReference type="ChEBI" id="CHEBI:30616"/>
    </ligand>
</feature>
<protein>
    <recommendedName>
        <fullName>Uncharacterized ABC transporter ATP-binding protein YclH</fullName>
    </recommendedName>
</protein>
<reference key="1">
    <citation type="journal article" date="1996" name="Microbiology">
        <title>The 25 degrees-36 degrees region of the Bacillus subtilis chromosome: determination of the sequence of a 146 kb segment and identification of 113 genes.</title>
        <authorList>
            <person name="Yamane K."/>
            <person name="Kumano M."/>
            <person name="Kurita K."/>
        </authorList>
    </citation>
    <scope>NUCLEOTIDE SEQUENCE [GENOMIC DNA]</scope>
    <source>
        <strain>168</strain>
    </source>
</reference>
<reference key="2">
    <citation type="journal article" date="1997" name="Nature">
        <title>The complete genome sequence of the Gram-positive bacterium Bacillus subtilis.</title>
        <authorList>
            <person name="Kunst F."/>
            <person name="Ogasawara N."/>
            <person name="Moszer I."/>
            <person name="Albertini A.M."/>
            <person name="Alloni G."/>
            <person name="Azevedo V."/>
            <person name="Bertero M.G."/>
            <person name="Bessieres P."/>
            <person name="Bolotin A."/>
            <person name="Borchert S."/>
            <person name="Borriss R."/>
            <person name="Boursier L."/>
            <person name="Brans A."/>
            <person name="Braun M."/>
            <person name="Brignell S.C."/>
            <person name="Bron S."/>
            <person name="Brouillet S."/>
            <person name="Bruschi C.V."/>
            <person name="Caldwell B."/>
            <person name="Capuano V."/>
            <person name="Carter N.M."/>
            <person name="Choi S.-K."/>
            <person name="Codani J.-J."/>
            <person name="Connerton I.F."/>
            <person name="Cummings N.J."/>
            <person name="Daniel R.A."/>
            <person name="Denizot F."/>
            <person name="Devine K.M."/>
            <person name="Duesterhoeft A."/>
            <person name="Ehrlich S.D."/>
            <person name="Emmerson P.T."/>
            <person name="Entian K.-D."/>
            <person name="Errington J."/>
            <person name="Fabret C."/>
            <person name="Ferrari E."/>
            <person name="Foulger D."/>
            <person name="Fritz C."/>
            <person name="Fujita M."/>
            <person name="Fujita Y."/>
            <person name="Fuma S."/>
            <person name="Galizzi A."/>
            <person name="Galleron N."/>
            <person name="Ghim S.-Y."/>
            <person name="Glaser P."/>
            <person name="Goffeau A."/>
            <person name="Golightly E.J."/>
            <person name="Grandi G."/>
            <person name="Guiseppi G."/>
            <person name="Guy B.J."/>
            <person name="Haga K."/>
            <person name="Haiech J."/>
            <person name="Harwood C.R."/>
            <person name="Henaut A."/>
            <person name="Hilbert H."/>
            <person name="Holsappel S."/>
            <person name="Hosono S."/>
            <person name="Hullo M.-F."/>
            <person name="Itaya M."/>
            <person name="Jones L.-M."/>
            <person name="Joris B."/>
            <person name="Karamata D."/>
            <person name="Kasahara Y."/>
            <person name="Klaerr-Blanchard M."/>
            <person name="Klein C."/>
            <person name="Kobayashi Y."/>
            <person name="Koetter P."/>
            <person name="Koningstein G."/>
            <person name="Krogh S."/>
            <person name="Kumano M."/>
            <person name="Kurita K."/>
            <person name="Lapidus A."/>
            <person name="Lardinois S."/>
            <person name="Lauber J."/>
            <person name="Lazarevic V."/>
            <person name="Lee S.-M."/>
            <person name="Levine A."/>
            <person name="Liu H."/>
            <person name="Masuda S."/>
            <person name="Mauel C."/>
            <person name="Medigue C."/>
            <person name="Medina N."/>
            <person name="Mellado R.P."/>
            <person name="Mizuno M."/>
            <person name="Moestl D."/>
            <person name="Nakai S."/>
            <person name="Noback M."/>
            <person name="Noone D."/>
            <person name="O'Reilly M."/>
            <person name="Ogawa K."/>
            <person name="Ogiwara A."/>
            <person name="Oudega B."/>
            <person name="Park S.-H."/>
            <person name="Parro V."/>
            <person name="Pohl T.M."/>
            <person name="Portetelle D."/>
            <person name="Porwollik S."/>
            <person name="Prescott A.M."/>
            <person name="Presecan E."/>
            <person name="Pujic P."/>
            <person name="Purnelle B."/>
            <person name="Rapoport G."/>
            <person name="Rey M."/>
            <person name="Reynolds S."/>
            <person name="Rieger M."/>
            <person name="Rivolta C."/>
            <person name="Rocha E."/>
            <person name="Roche B."/>
            <person name="Rose M."/>
            <person name="Sadaie Y."/>
            <person name="Sato T."/>
            <person name="Scanlan E."/>
            <person name="Schleich S."/>
            <person name="Schroeter R."/>
            <person name="Scoffone F."/>
            <person name="Sekiguchi J."/>
            <person name="Sekowska A."/>
            <person name="Seror S.J."/>
            <person name="Serror P."/>
            <person name="Shin B.-S."/>
            <person name="Soldo B."/>
            <person name="Sorokin A."/>
            <person name="Tacconi E."/>
            <person name="Takagi T."/>
            <person name="Takahashi H."/>
            <person name="Takemaru K."/>
            <person name="Takeuchi M."/>
            <person name="Tamakoshi A."/>
            <person name="Tanaka T."/>
            <person name="Terpstra P."/>
            <person name="Tognoni A."/>
            <person name="Tosato V."/>
            <person name="Uchiyama S."/>
            <person name="Vandenbol M."/>
            <person name="Vannier F."/>
            <person name="Vassarotti A."/>
            <person name="Viari A."/>
            <person name="Wambutt R."/>
            <person name="Wedler E."/>
            <person name="Wedler H."/>
            <person name="Weitzenegger T."/>
            <person name="Winters P."/>
            <person name="Wipat A."/>
            <person name="Yamamoto H."/>
            <person name="Yamane K."/>
            <person name="Yasumoto K."/>
            <person name="Yata K."/>
            <person name="Yoshida K."/>
            <person name="Yoshikawa H.-F."/>
            <person name="Zumstein E."/>
            <person name="Yoshikawa H."/>
            <person name="Danchin A."/>
        </authorList>
    </citation>
    <scope>NUCLEOTIDE SEQUENCE [LARGE SCALE GENOMIC DNA]</scope>
    <source>
        <strain>168</strain>
    </source>
</reference>
<gene>
    <name type="primary">yclH</name>
    <name type="ordered locus">BSU03730</name>
</gene>
<name>YCLH_BACSU</name>
<accession>P94411</accession>
<accession>Q797P4</accession>
<sequence>MSLLQFQQVGYWYKNKSQPLFQDINISFQKGKFYTIVGTSGTGKTTFLSLAGGLDAPKEGNILYDGKAVSKIGLTNFRNQYVSIVFQAYNLLPYMTALQNVTTAMEITGSKEKNKESYALDMLQKVGINEKQARQKVLTLSGGQQQRVSITRAFCCDTDLIVADEPTGNLDEDTSKEIVRLFQDLAHKEDKCVIMVTHDEQIAKVSDINIRLSRGSFTVKENVAVV</sequence>
<dbReference type="EMBL" id="D50453">
    <property type="protein sequence ID" value="BAA09005.1"/>
    <property type="molecule type" value="Genomic_DNA"/>
</dbReference>
<dbReference type="EMBL" id="AL009126">
    <property type="protein sequence ID" value="CAB12181.1"/>
    <property type="molecule type" value="Genomic_DNA"/>
</dbReference>
<dbReference type="PIR" id="E69762">
    <property type="entry name" value="E69762"/>
</dbReference>
<dbReference type="RefSeq" id="NP_388255.1">
    <property type="nucleotide sequence ID" value="NC_000964.3"/>
</dbReference>
<dbReference type="RefSeq" id="WP_003234507.1">
    <property type="nucleotide sequence ID" value="NZ_OZ025638.1"/>
</dbReference>
<dbReference type="SMR" id="P94411"/>
<dbReference type="FunCoup" id="P94411">
    <property type="interactions" value="58"/>
</dbReference>
<dbReference type="STRING" id="224308.BSU03730"/>
<dbReference type="PaxDb" id="224308-BSU03730"/>
<dbReference type="EnsemblBacteria" id="CAB12181">
    <property type="protein sequence ID" value="CAB12181"/>
    <property type="gene ID" value="BSU_03730"/>
</dbReference>
<dbReference type="GeneID" id="938289"/>
<dbReference type="KEGG" id="bsu:BSU03730"/>
<dbReference type="PATRIC" id="fig|224308.179.peg.393"/>
<dbReference type="eggNOG" id="COG1136">
    <property type="taxonomic scope" value="Bacteria"/>
</dbReference>
<dbReference type="InParanoid" id="P94411"/>
<dbReference type="OrthoDB" id="9791546at2"/>
<dbReference type="PhylomeDB" id="P94411"/>
<dbReference type="BioCyc" id="BSUB:BSU03730-MONOMER"/>
<dbReference type="Proteomes" id="UP000001570">
    <property type="component" value="Chromosome"/>
</dbReference>
<dbReference type="GO" id="GO:0005886">
    <property type="term" value="C:plasma membrane"/>
    <property type="evidence" value="ECO:0000318"/>
    <property type="project" value="GO_Central"/>
</dbReference>
<dbReference type="GO" id="GO:0005524">
    <property type="term" value="F:ATP binding"/>
    <property type="evidence" value="ECO:0007669"/>
    <property type="project" value="UniProtKB-KW"/>
</dbReference>
<dbReference type="GO" id="GO:0016887">
    <property type="term" value="F:ATP hydrolysis activity"/>
    <property type="evidence" value="ECO:0007669"/>
    <property type="project" value="InterPro"/>
</dbReference>
<dbReference type="GO" id="GO:0022857">
    <property type="term" value="F:transmembrane transporter activity"/>
    <property type="evidence" value="ECO:0000318"/>
    <property type="project" value="GO_Central"/>
</dbReference>
<dbReference type="GO" id="GO:0055085">
    <property type="term" value="P:transmembrane transport"/>
    <property type="evidence" value="ECO:0000318"/>
    <property type="project" value="GO_Central"/>
</dbReference>
<dbReference type="CDD" id="cd03255">
    <property type="entry name" value="ABC_MJ0796_LolCDE_FtsE"/>
    <property type="match status" value="1"/>
</dbReference>
<dbReference type="FunFam" id="3.40.50.300:FF:000056">
    <property type="entry name" value="Cell division ATP-binding protein FtsE"/>
    <property type="match status" value="1"/>
</dbReference>
<dbReference type="Gene3D" id="3.40.50.300">
    <property type="entry name" value="P-loop containing nucleotide triphosphate hydrolases"/>
    <property type="match status" value="1"/>
</dbReference>
<dbReference type="InterPro" id="IPR003593">
    <property type="entry name" value="AAA+_ATPase"/>
</dbReference>
<dbReference type="InterPro" id="IPR003439">
    <property type="entry name" value="ABC_transporter-like_ATP-bd"/>
</dbReference>
<dbReference type="InterPro" id="IPR015854">
    <property type="entry name" value="ABC_transpr_LolD-like"/>
</dbReference>
<dbReference type="InterPro" id="IPR017911">
    <property type="entry name" value="MacB-like_ATP-bd"/>
</dbReference>
<dbReference type="InterPro" id="IPR027417">
    <property type="entry name" value="P-loop_NTPase"/>
</dbReference>
<dbReference type="PANTHER" id="PTHR24220">
    <property type="entry name" value="IMPORT ATP-BINDING PROTEIN"/>
    <property type="match status" value="1"/>
</dbReference>
<dbReference type="PANTHER" id="PTHR24220:SF689">
    <property type="entry name" value="LIPOPROTEIN-RELEASING SYSTEM ATP-BINDING PROTEIN LOLD"/>
    <property type="match status" value="1"/>
</dbReference>
<dbReference type="Pfam" id="PF00005">
    <property type="entry name" value="ABC_tran"/>
    <property type="match status" value="1"/>
</dbReference>
<dbReference type="SMART" id="SM00382">
    <property type="entry name" value="AAA"/>
    <property type="match status" value="1"/>
</dbReference>
<dbReference type="SUPFAM" id="SSF52540">
    <property type="entry name" value="P-loop containing nucleoside triphosphate hydrolases"/>
    <property type="match status" value="1"/>
</dbReference>
<dbReference type="PROSITE" id="PS50893">
    <property type="entry name" value="ABC_TRANSPORTER_2"/>
    <property type="match status" value="1"/>
</dbReference>
<organism>
    <name type="scientific">Bacillus subtilis (strain 168)</name>
    <dbReference type="NCBI Taxonomy" id="224308"/>
    <lineage>
        <taxon>Bacteria</taxon>
        <taxon>Bacillati</taxon>
        <taxon>Bacillota</taxon>
        <taxon>Bacilli</taxon>
        <taxon>Bacillales</taxon>
        <taxon>Bacillaceae</taxon>
        <taxon>Bacillus</taxon>
    </lineage>
</organism>
<comment type="similarity">
    <text evidence="2">Belongs to the ABC transporter superfamily.</text>
</comment>
<evidence type="ECO:0000255" key="1">
    <source>
        <dbReference type="PROSITE-ProRule" id="PRU00434"/>
    </source>
</evidence>
<evidence type="ECO:0000305" key="2"/>